<sequence length="215" mass="23404">MFTGIIEEVGKIAQIHKQGEFAVVTINATKVLQDVHLGDTIAVNGVCLTVTSFSSNQFTADVMSETLKRTSLGELKSNSPVNLERAMAANGRFGGHIVSGHIDGTGEIAEITPAHNSTWYRIKTSPKLMRYIIEKGSITIDGISLTVVDTDDESFRVSIIPHTIKETNLGSKKIGSIVNLENDIVGKYIEQFLLKKPADEPKSNLSLDFLKQAGF</sequence>
<gene>
    <name type="primary">ribE</name>
    <name type="synonym">ribB</name>
</gene>
<accession>P50854</accession>
<proteinExistence type="inferred from homology"/>
<dbReference type="EC" id="2.5.1.9"/>
<dbReference type="EMBL" id="U27202">
    <property type="protein sequence ID" value="AAA86523.1"/>
    <property type="molecule type" value="Genomic_DNA"/>
</dbReference>
<dbReference type="PIR" id="T50547">
    <property type="entry name" value="T50547"/>
</dbReference>
<dbReference type="SMR" id="P50854"/>
<dbReference type="UniPathway" id="UPA00275">
    <property type="reaction ID" value="UER00405"/>
</dbReference>
<dbReference type="GO" id="GO:0004746">
    <property type="term" value="F:riboflavin synthase activity"/>
    <property type="evidence" value="ECO:0007669"/>
    <property type="project" value="UniProtKB-EC"/>
</dbReference>
<dbReference type="GO" id="GO:0009231">
    <property type="term" value="P:riboflavin biosynthetic process"/>
    <property type="evidence" value="ECO:0007669"/>
    <property type="project" value="UniProtKB-UniPathway"/>
</dbReference>
<dbReference type="CDD" id="cd00402">
    <property type="entry name" value="Riboflavin_synthase_like"/>
    <property type="match status" value="1"/>
</dbReference>
<dbReference type="FunFam" id="2.40.30.20:FF:000003">
    <property type="entry name" value="Riboflavin synthase, alpha subunit"/>
    <property type="match status" value="1"/>
</dbReference>
<dbReference type="FunFam" id="2.40.30.20:FF:000004">
    <property type="entry name" value="Riboflavin synthase, alpha subunit"/>
    <property type="match status" value="1"/>
</dbReference>
<dbReference type="Gene3D" id="2.40.30.20">
    <property type="match status" value="2"/>
</dbReference>
<dbReference type="InterPro" id="IPR023366">
    <property type="entry name" value="ATP_synth_asu-like_sf"/>
</dbReference>
<dbReference type="InterPro" id="IPR001783">
    <property type="entry name" value="Lumazine-bd"/>
</dbReference>
<dbReference type="InterPro" id="IPR026017">
    <property type="entry name" value="Lumazine-bd_dom"/>
</dbReference>
<dbReference type="InterPro" id="IPR017938">
    <property type="entry name" value="Riboflavin_synthase-like_b-brl"/>
</dbReference>
<dbReference type="NCBIfam" id="NF006767">
    <property type="entry name" value="PRK09289.1"/>
    <property type="match status" value="1"/>
</dbReference>
<dbReference type="NCBIfam" id="NF009566">
    <property type="entry name" value="PRK13020.1"/>
    <property type="match status" value="1"/>
</dbReference>
<dbReference type="NCBIfam" id="TIGR00187">
    <property type="entry name" value="ribE"/>
    <property type="match status" value="1"/>
</dbReference>
<dbReference type="PANTHER" id="PTHR21098:SF12">
    <property type="entry name" value="RIBOFLAVIN SYNTHASE"/>
    <property type="match status" value="1"/>
</dbReference>
<dbReference type="PANTHER" id="PTHR21098">
    <property type="entry name" value="RIBOFLAVIN SYNTHASE ALPHA CHAIN"/>
    <property type="match status" value="1"/>
</dbReference>
<dbReference type="Pfam" id="PF00677">
    <property type="entry name" value="Lum_binding"/>
    <property type="match status" value="2"/>
</dbReference>
<dbReference type="PIRSF" id="PIRSF000498">
    <property type="entry name" value="Riboflavin_syn_A"/>
    <property type="match status" value="1"/>
</dbReference>
<dbReference type="SUPFAM" id="SSF63380">
    <property type="entry name" value="Riboflavin synthase domain-like"/>
    <property type="match status" value="2"/>
</dbReference>
<dbReference type="PROSITE" id="PS51177">
    <property type="entry name" value="LUMAZINE_BIND"/>
    <property type="match status" value="2"/>
</dbReference>
<comment type="function">
    <text evidence="1">Catalyzes the dismutation of two molecules of 6,7-dimethyl-8-ribityllumazine, resulting in the formation of riboflavin and 5-amino-6-(D-ribitylamino)uracil.</text>
</comment>
<comment type="catalytic activity">
    <reaction>
        <text>2 6,7-dimethyl-8-(1-D-ribityl)lumazine + H(+) = 5-amino-6-(D-ribitylamino)uracil + riboflavin</text>
        <dbReference type="Rhea" id="RHEA:20772"/>
        <dbReference type="ChEBI" id="CHEBI:15378"/>
        <dbReference type="ChEBI" id="CHEBI:15934"/>
        <dbReference type="ChEBI" id="CHEBI:57986"/>
        <dbReference type="ChEBI" id="CHEBI:58201"/>
        <dbReference type="EC" id="2.5.1.9"/>
    </reaction>
</comment>
<comment type="pathway">
    <text>Cofactor biosynthesis; riboflavin biosynthesis; riboflavin from 2-hydroxy-3-oxobutyl phosphate and 5-amino-6-(D-ribitylamino)uracil: step 2/2.</text>
</comment>
<comment type="subunit">
    <text evidence="1">Homotrimer.</text>
</comment>
<keyword id="KW-0677">Repeat</keyword>
<keyword id="KW-0686">Riboflavin biosynthesis</keyword>
<keyword id="KW-0808">Transferase</keyword>
<evidence type="ECO:0000250" key="1"/>
<evidence type="ECO:0000250" key="2">
    <source>
        <dbReference type="UniProtKB" id="P0AFU8"/>
    </source>
</evidence>
<evidence type="ECO:0000250" key="3">
    <source>
        <dbReference type="UniProtKB" id="Q2YN92"/>
    </source>
</evidence>
<reference key="1">
    <citation type="journal article" date="1995" name="J. Bacteriol.">
        <title>Characterization of Actinobacillus pleuropneumoniae riboflavin biosynthesis genes.</title>
        <authorList>
            <person name="Fuller T.E."/>
            <person name="Mulks M.H."/>
        </authorList>
    </citation>
    <scope>NUCLEOTIDE SEQUENCE [GENOMIC DNA]</scope>
    <source>
        <strain>ISU-178 / Serotype 5</strain>
    </source>
</reference>
<name>RISA_ACTPL</name>
<feature type="chain" id="PRO_0000068156" description="Riboflavin synthase">
    <location>
        <begin position="1"/>
        <end position="215"/>
    </location>
</feature>
<feature type="repeat" description="Lumazine-binding 1">
    <location>
        <begin position="1"/>
        <end position="96"/>
    </location>
</feature>
<feature type="repeat" description="Lumazine-binding 2">
    <location>
        <begin position="97"/>
        <end position="193"/>
    </location>
</feature>
<feature type="binding site" evidence="3">
    <location>
        <begin position="4"/>
        <end position="6"/>
    </location>
    <ligand>
        <name>2,4-dihydroxypteridine</name>
        <dbReference type="ChEBI" id="CHEBI:16489"/>
        <label>1</label>
    </ligand>
</feature>
<feature type="binding site" evidence="3">
    <location>
        <begin position="47"/>
        <end position="49"/>
    </location>
    <ligand>
        <name>2,4-dihydroxypteridine</name>
        <dbReference type="ChEBI" id="CHEBI:16489"/>
        <label>2</label>
        <note>ligand shared between two trimeric partners</note>
    </ligand>
</feature>
<feature type="binding site" evidence="2">
    <location>
        <begin position="61"/>
        <end position="66"/>
    </location>
    <ligand>
        <name>2,4-dihydroxypteridine</name>
        <dbReference type="ChEBI" id="CHEBI:16489"/>
        <label>2</label>
        <note>ligand shared between two trimeric partners</note>
    </ligand>
</feature>
<feature type="binding site" evidence="3">
    <location>
        <begin position="100"/>
        <end position="102"/>
    </location>
    <ligand>
        <name>2,4-dihydroxypteridine</name>
        <dbReference type="ChEBI" id="CHEBI:16489"/>
        <label>2</label>
        <note>ligand shared between two trimeric partners</note>
    </ligand>
</feature>
<feature type="binding site" description="in other chain" evidence="3">
    <location>
        <position position="135"/>
    </location>
    <ligand>
        <name>2,4-dihydroxypteridine</name>
        <dbReference type="ChEBI" id="CHEBI:16489"/>
        <label>2</label>
        <note>ligand shared between two trimeric partners</note>
    </ligand>
</feature>
<feature type="binding site" evidence="3">
    <location>
        <begin position="144"/>
        <end position="146"/>
    </location>
    <ligand>
        <name>2,4-dihydroxypteridine</name>
        <dbReference type="ChEBI" id="CHEBI:16489"/>
        <label>1</label>
    </ligand>
</feature>
<feature type="binding site" evidence="3">
    <location>
        <begin position="158"/>
        <end position="163"/>
    </location>
    <ligand>
        <name>2,4-dihydroxypteridine</name>
        <dbReference type="ChEBI" id="CHEBI:16489"/>
        <label>1</label>
    </ligand>
</feature>
<protein>
    <recommendedName>
        <fullName>Riboflavin synthase</fullName>
        <shortName>RS</shortName>
        <ecNumber>2.5.1.9</ecNumber>
    </recommendedName>
</protein>
<organism>
    <name type="scientific">Actinobacillus pleuropneumoniae</name>
    <name type="common">Haemophilus pleuropneumoniae</name>
    <dbReference type="NCBI Taxonomy" id="715"/>
    <lineage>
        <taxon>Bacteria</taxon>
        <taxon>Pseudomonadati</taxon>
        <taxon>Pseudomonadota</taxon>
        <taxon>Gammaproteobacteria</taxon>
        <taxon>Pasteurellales</taxon>
        <taxon>Pasteurellaceae</taxon>
        <taxon>Actinobacillus</taxon>
    </lineage>
</organism>